<reference key="1">
    <citation type="journal article" date="2004" name="Proc. Natl. Acad. Sci. U.S.A.">
        <title>Genome sequence of Picrophilus torridus and its implications for life around pH 0.</title>
        <authorList>
            <person name="Fuetterer O."/>
            <person name="Angelov A."/>
            <person name="Liesegang H."/>
            <person name="Gottschalk G."/>
            <person name="Schleper C."/>
            <person name="Schepers B."/>
            <person name="Dock C."/>
            <person name="Antranikian G."/>
            <person name="Liebl W."/>
        </authorList>
    </citation>
    <scope>NUCLEOTIDE SEQUENCE [LARGE SCALE GENOMIC DNA]</scope>
    <source>
        <strain>ATCC 700027 / DSM 9790 / JCM 10055 / NBRC 100828 / KAW 2/3</strain>
    </source>
</reference>
<name>THIE_PICTO</name>
<feature type="chain" id="PRO_0000157072" description="Thiamine-phosphate synthase">
    <location>
        <begin position="1"/>
        <end position="204"/>
    </location>
</feature>
<feature type="binding site" evidence="1">
    <location>
        <begin position="34"/>
        <end position="38"/>
    </location>
    <ligand>
        <name>4-amino-2-methyl-5-(diphosphooxymethyl)pyrimidine</name>
        <dbReference type="ChEBI" id="CHEBI:57841"/>
    </ligand>
</feature>
<feature type="binding site" evidence="1">
    <location>
        <position position="66"/>
    </location>
    <ligand>
        <name>4-amino-2-methyl-5-(diphosphooxymethyl)pyrimidine</name>
        <dbReference type="ChEBI" id="CHEBI:57841"/>
    </ligand>
</feature>
<feature type="binding site" evidence="1">
    <location>
        <position position="67"/>
    </location>
    <ligand>
        <name>Mg(2+)</name>
        <dbReference type="ChEBI" id="CHEBI:18420"/>
    </ligand>
</feature>
<feature type="binding site" evidence="1">
    <location>
        <position position="86"/>
    </location>
    <ligand>
        <name>Mg(2+)</name>
        <dbReference type="ChEBI" id="CHEBI:18420"/>
    </ligand>
</feature>
<feature type="binding site" evidence="1">
    <location>
        <position position="104"/>
    </location>
    <ligand>
        <name>4-amino-2-methyl-5-(diphosphooxymethyl)pyrimidine</name>
        <dbReference type="ChEBI" id="CHEBI:57841"/>
    </ligand>
</feature>
<feature type="binding site" evidence="1">
    <location>
        <begin position="131"/>
        <end position="133"/>
    </location>
    <ligand>
        <name>2-[(2R,5Z)-2-carboxy-4-methylthiazol-5(2H)-ylidene]ethyl phosphate</name>
        <dbReference type="ChEBI" id="CHEBI:62899"/>
    </ligand>
</feature>
<feature type="binding site" evidence="1">
    <location>
        <position position="134"/>
    </location>
    <ligand>
        <name>4-amino-2-methyl-5-(diphosphooxymethyl)pyrimidine</name>
        <dbReference type="ChEBI" id="CHEBI:57841"/>
    </ligand>
</feature>
<feature type="binding site" evidence="1">
    <location>
        <position position="160"/>
    </location>
    <ligand>
        <name>2-[(2R,5Z)-2-carboxy-4-methylthiazol-5(2H)-ylidene]ethyl phosphate</name>
        <dbReference type="ChEBI" id="CHEBI:62899"/>
    </ligand>
</feature>
<feature type="binding site" evidence="1">
    <location>
        <begin position="180"/>
        <end position="181"/>
    </location>
    <ligand>
        <name>2-[(2R,5Z)-2-carboxy-4-methylthiazol-5(2H)-ylidene]ethyl phosphate</name>
        <dbReference type="ChEBI" id="CHEBI:62899"/>
    </ligand>
</feature>
<accession>Q6KZH9</accession>
<organism>
    <name type="scientific">Picrophilus torridus (strain ATCC 700027 / DSM 9790 / JCM 10055 / NBRC 100828 / KAW 2/3)</name>
    <dbReference type="NCBI Taxonomy" id="1122961"/>
    <lineage>
        <taxon>Archaea</taxon>
        <taxon>Methanobacteriati</taxon>
        <taxon>Thermoplasmatota</taxon>
        <taxon>Thermoplasmata</taxon>
        <taxon>Thermoplasmatales</taxon>
        <taxon>Picrophilaceae</taxon>
        <taxon>Picrophilus</taxon>
    </lineage>
</organism>
<gene>
    <name evidence="1" type="primary">thiE</name>
    <name type="ordered locus">PTO1288</name>
</gene>
<dbReference type="EC" id="2.5.1.3" evidence="1"/>
<dbReference type="EMBL" id="AE017261">
    <property type="protein sequence ID" value="AAT43873.1"/>
    <property type="molecule type" value="Genomic_DNA"/>
</dbReference>
<dbReference type="RefSeq" id="WP_011178089.1">
    <property type="nucleotide sequence ID" value="NC_005877.1"/>
</dbReference>
<dbReference type="SMR" id="Q6KZH9"/>
<dbReference type="STRING" id="263820.PTO1288"/>
<dbReference type="PaxDb" id="263820-PTO1288"/>
<dbReference type="GeneID" id="2844411"/>
<dbReference type="KEGG" id="pto:PTO1288"/>
<dbReference type="PATRIC" id="fig|263820.9.peg.1337"/>
<dbReference type="eggNOG" id="arCOG01089">
    <property type="taxonomic scope" value="Archaea"/>
</dbReference>
<dbReference type="HOGENOM" id="CLU_018272_3_1_2"/>
<dbReference type="InParanoid" id="Q6KZH9"/>
<dbReference type="OrthoDB" id="85572at2157"/>
<dbReference type="UniPathway" id="UPA00060">
    <property type="reaction ID" value="UER00141"/>
</dbReference>
<dbReference type="Proteomes" id="UP000000438">
    <property type="component" value="Chromosome"/>
</dbReference>
<dbReference type="GO" id="GO:0005737">
    <property type="term" value="C:cytoplasm"/>
    <property type="evidence" value="ECO:0007669"/>
    <property type="project" value="TreeGrafter"/>
</dbReference>
<dbReference type="GO" id="GO:0000287">
    <property type="term" value="F:magnesium ion binding"/>
    <property type="evidence" value="ECO:0007669"/>
    <property type="project" value="UniProtKB-UniRule"/>
</dbReference>
<dbReference type="GO" id="GO:0004789">
    <property type="term" value="F:thiamine-phosphate diphosphorylase activity"/>
    <property type="evidence" value="ECO:0007669"/>
    <property type="project" value="UniProtKB-UniRule"/>
</dbReference>
<dbReference type="GO" id="GO:0009228">
    <property type="term" value="P:thiamine biosynthetic process"/>
    <property type="evidence" value="ECO:0007669"/>
    <property type="project" value="UniProtKB-KW"/>
</dbReference>
<dbReference type="GO" id="GO:0009229">
    <property type="term" value="P:thiamine diphosphate biosynthetic process"/>
    <property type="evidence" value="ECO:0007669"/>
    <property type="project" value="UniProtKB-UniRule"/>
</dbReference>
<dbReference type="CDD" id="cd00564">
    <property type="entry name" value="TMP_TenI"/>
    <property type="match status" value="1"/>
</dbReference>
<dbReference type="Gene3D" id="3.20.20.70">
    <property type="entry name" value="Aldolase class I"/>
    <property type="match status" value="1"/>
</dbReference>
<dbReference type="HAMAP" id="MF_00097">
    <property type="entry name" value="TMP_synthase"/>
    <property type="match status" value="1"/>
</dbReference>
<dbReference type="InterPro" id="IPR013785">
    <property type="entry name" value="Aldolase_TIM"/>
</dbReference>
<dbReference type="InterPro" id="IPR036206">
    <property type="entry name" value="ThiamineP_synth_sf"/>
</dbReference>
<dbReference type="InterPro" id="IPR022998">
    <property type="entry name" value="ThiamineP_synth_TenI"/>
</dbReference>
<dbReference type="InterPro" id="IPR034291">
    <property type="entry name" value="TMP_synthase"/>
</dbReference>
<dbReference type="NCBIfam" id="TIGR00693">
    <property type="entry name" value="thiE"/>
    <property type="match status" value="1"/>
</dbReference>
<dbReference type="PANTHER" id="PTHR20857">
    <property type="entry name" value="THIAMINE-PHOSPHATE PYROPHOSPHORYLASE"/>
    <property type="match status" value="1"/>
</dbReference>
<dbReference type="PANTHER" id="PTHR20857:SF15">
    <property type="entry name" value="THIAMINE-PHOSPHATE SYNTHASE"/>
    <property type="match status" value="1"/>
</dbReference>
<dbReference type="Pfam" id="PF02581">
    <property type="entry name" value="TMP-TENI"/>
    <property type="match status" value="1"/>
</dbReference>
<dbReference type="SUPFAM" id="SSF51391">
    <property type="entry name" value="Thiamin phosphate synthase"/>
    <property type="match status" value="1"/>
</dbReference>
<evidence type="ECO:0000255" key="1">
    <source>
        <dbReference type="HAMAP-Rule" id="MF_00097"/>
    </source>
</evidence>
<proteinExistence type="inferred from homology"/>
<comment type="function">
    <text evidence="1">Condenses 4-methyl-5-(beta-hydroxyethyl)thiazole monophosphate (THZ-P) and 2-methyl-4-amino-5-hydroxymethyl pyrimidine pyrophosphate (HMP-PP) to form thiamine monophosphate (TMP).</text>
</comment>
<comment type="catalytic activity">
    <reaction evidence="1">
        <text>2-[(2R,5Z)-2-carboxy-4-methylthiazol-5(2H)-ylidene]ethyl phosphate + 4-amino-2-methyl-5-(diphosphooxymethyl)pyrimidine + 2 H(+) = thiamine phosphate + CO2 + diphosphate</text>
        <dbReference type="Rhea" id="RHEA:47844"/>
        <dbReference type="ChEBI" id="CHEBI:15378"/>
        <dbReference type="ChEBI" id="CHEBI:16526"/>
        <dbReference type="ChEBI" id="CHEBI:33019"/>
        <dbReference type="ChEBI" id="CHEBI:37575"/>
        <dbReference type="ChEBI" id="CHEBI:57841"/>
        <dbReference type="ChEBI" id="CHEBI:62899"/>
        <dbReference type="EC" id="2.5.1.3"/>
    </reaction>
</comment>
<comment type="catalytic activity">
    <reaction evidence="1">
        <text>2-(2-carboxy-4-methylthiazol-5-yl)ethyl phosphate + 4-amino-2-methyl-5-(diphosphooxymethyl)pyrimidine + 2 H(+) = thiamine phosphate + CO2 + diphosphate</text>
        <dbReference type="Rhea" id="RHEA:47848"/>
        <dbReference type="ChEBI" id="CHEBI:15378"/>
        <dbReference type="ChEBI" id="CHEBI:16526"/>
        <dbReference type="ChEBI" id="CHEBI:33019"/>
        <dbReference type="ChEBI" id="CHEBI:37575"/>
        <dbReference type="ChEBI" id="CHEBI:57841"/>
        <dbReference type="ChEBI" id="CHEBI:62890"/>
        <dbReference type="EC" id="2.5.1.3"/>
    </reaction>
</comment>
<comment type="catalytic activity">
    <reaction evidence="1">
        <text>4-methyl-5-(2-phosphooxyethyl)-thiazole + 4-amino-2-methyl-5-(diphosphooxymethyl)pyrimidine + H(+) = thiamine phosphate + diphosphate</text>
        <dbReference type="Rhea" id="RHEA:22328"/>
        <dbReference type="ChEBI" id="CHEBI:15378"/>
        <dbReference type="ChEBI" id="CHEBI:33019"/>
        <dbReference type="ChEBI" id="CHEBI:37575"/>
        <dbReference type="ChEBI" id="CHEBI:57841"/>
        <dbReference type="ChEBI" id="CHEBI:58296"/>
        <dbReference type="EC" id="2.5.1.3"/>
    </reaction>
</comment>
<comment type="cofactor">
    <cofactor evidence="1">
        <name>Mg(2+)</name>
        <dbReference type="ChEBI" id="CHEBI:18420"/>
    </cofactor>
    <text evidence="1">Binds 1 Mg(2+) ion per subunit.</text>
</comment>
<comment type="pathway">
    <text evidence="1">Cofactor biosynthesis; thiamine diphosphate biosynthesis; thiamine phosphate from 4-amino-2-methyl-5-diphosphomethylpyrimidine and 4-methyl-5-(2-phosphoethyl)-thiazole: step 1/1.</text>
</comment>
<comment type="similarity">
    <text evidence="1">Belongs to the thiamine-phosphate synthase family.</text>
</comment>
<sequence>MKLSGLYLVTKDYYNGNFFNIVEESLSAGVNILQYRDKTNPYNIKIEAGRRLKNLAYKYNVPFIVDDSPVLLDILDADGIHIGKDDPPFEYIKERFPGKIIGVSTYGDINLGIKYERLGADYIAFGSFFKTSTKDDAEMCDINILNNASKFNIPVFAIGGINTRNVDELLKYKISGIAVVSAIFDAANPGEATRTFLEKLRKIL</sequence>
<protein>
    <recommendedName>
        <fullName evidence="1">Thiamine-phosphate synthase</fullName>
        <shortName evidence="1">TP synthase</shortName>
        <shortName evidence="1">TPS</shortName>
        <ecNumber evidence="1">2.5.1.3</ecNumber>
    </recommendedName>
    <alternativeName>
        <fullName evidence="1">Thiamine-phosphate pyrophosphorylase</fullName>
        <shortName evidence="1">TMP pyrophosphorylase</shortName>
        <shortName evidence="1">TMP-PPase</shortName>
    </alternativeName>
</protein>
<keyword id="KW-0460">Magnesium</keyword>
<keyword id="KW-0479">Metal-binding</keyword>
<keyword id="KW-0784">Thiamine biosynthesis</keyword>
<keyword id="KW-0808">Transferase</keyword>